<proteinExistence type="inferred from homology"/>
<sequence length="362" mass="40219">MTQRAYNFNAGPSALPQEVLEKAQQQLVDFRDSGMSIMEMSHRSAIFDEVHNEAIALLKKLYAIPENYEVLFLQGGASLQFTMVPMNFLSTDQKASYVLSGSWSEKAFKEAKFFGTPVEAASTKDNQYRNIPALADIQFDEDDAYVHITSNNTIYGTQWRDYPDTGNVPLVADMSSDILSKPIDIQKFGLIYAGAQKNLGPSGVTVVIIRKDLLEKANKSIPTMLKYTTHADSNSLYNTPPTFGIYMLGEVLKWVESNGGVTAVEKRNELKAKVIYDAIDNSNGFYKGHATPESRSLMNITFRVADEELEKQFLAEAKAAGFVGLNGHRSVGGCRASTYNAVPLEACEALRDFMVDFQQKHQ</sequence>
<name>SERC_LYSSC</name>
<comment type="function">
    <text evidence="1">Catalyzes the reversible conversion of 3-phosphohydroxypyruvate to phosphoserine and of 3-hydroxy-2-oxo-4-phosphonooxybutanoate to phosphohydroxythreonine.</text>
</comment>
<comment type="catalytic activity">
    <reaction evidence="1">
        <text>O-phospho-L-serine + 2-oxoglutarate = 3-phosphooxypyruvate + L-glutamate</text>
        <dbReference type="Rhea" id="RHEA:14329"/>
        <dbReference type="ChEBI" id="CHEBI:16810"/>
        <dbReference type="ChEBI" id="CHEBI:18110"/>
        <dbReference type="ChEBI" id="CHEBI:29985"/>
        <dbReference type="ChEBI" id="CHEBI:57524"/>
        <dbReference type="EC" id="2.6.1.52"/>
    </reaction>
</comment>
<comment type="catalytic activity">
    <reaction evidence="1">
        <text>4-(phosphooxy)-L-threonine + 2-oxoglutarate = (R)-3-hydroxy-2-oxo-4-phosphooxybutanoate + L-glutamate</text>
        <dbReference type="Rhea" id="RHEA:16573"/>
        <dbReference type="ChEBI" id="CHEBI:16810"/>
        <dbReference type="ChEBI" id="CHEBI:29985"/>
        <dbReference type="ChEBI" id="CHEBI:58452"/>
        <dbReference type="ChEBI" id="CHEBI:58538"/>
        <dbReference type="EC" id="2.6.1.52"/>
    </reaction>
</comment>
<comment type="cofactor">
    <cofactor evidence="1">
        <name>pyridoxal 5'-phosphate</name>
        <dbReference type="ChEBI" id="CHEBI:597326"/>
    </cofactor>
    <text evidence="1">Binds 1 pyridoxal phosphate per subunit.</text>
</comment>
<comment type="pathway">
    <text evidence="1">Amino-acid biosynthesis; L-serine biosynthesis; L-serine from 3-phospho-D-glycerate: step 2/3.</text>
</comment>
<comment type="subunit">
    <text evidence="1">Homodimer.</text>
</comment>
<comment type="subcellular location">
    <subcellularLocation>
        <location evidence="1">Cytoplasm</location>
    </subcellularLocation>
</comment>
<comment type="similarity">
    <text evidence="1">Belongs to the class-V pyridoxal-phosphate-dependent aminotransferase family. SerC subfamily.</text>
</comment>
<keyword id="KW-0028">Amino-acid biosynthesis</keyword>
<keyword id="KW-0032">Aminotransferase</keyword>
<keyword id="KW-0963">Cytoplasm</keyword>
<keyword id="KW-0663">Pyridoxal phosphate</keyword>
<keyword id="KW-0718">Serine biosynthesis</keyword>
<keyword id="KW-0808">Transferase</keyword>
<protein>
    <recommendedName>
        <fullName evidence="1">Phosphoserine aminotransferase</fullName>
        <ecNumber evidence="1">2.6.1.52</ecNumber>
    </recommendedName>
    <alternativeName>
        <fullName evidence="1">Phosphohydroxythreonine aminotransferase</fullName>
        <shortName evidence="1">PSAT</shortName>
    </alternativeName>
</protein>
<feature type="chain" id="PRO_1000097218" description="Phosphoserine aminotransferase">
    <location>
        <begin position="1"/>
        <end position="362"/>
    </location>
</feature>
<feature type="binding site" evidence="1">
    <location>
        <position position="43"/>
    </location>
    <ligand>
        <name>L-glutamate</name>
        <dbReference type="ChEBI" id="CHEBI:29985"/>
    </ligand>
</feature>
<feature type="binding site" evidence="1">
    <location>
        <begin position="77"/>
        <end position="78"/>
    </location>
    <ligand>
        <name>pyridoxal 5'-phosphate</name>
        <dbReference type="ChEBI" id="CHEBI:597326"/>
    </ligand>
</feature>
<feature type="binding site" evidence="1">
    <location>
        <position position="103"/>
    </location>
    <ligand>
        <name>pyridoxal 5'-phosphate</name>
        <dbReference type="ChEBI" id="CHEBI:597326"/>
    </ligand>
</feature>
<feature type="binding site" evidence="1">
    <location>
        <position position="153"/>
    </location>
    <ligand>
        <name>pyridoxal 5'-phosphate</name>
        <dbReference type="ChEBI" id="CHEBI:597326"/>
    </ligand>
</feature>
<feature type="binding site" evidence="1">
    <location>
        <position position="173"/>
    </location>
    <ligand>
        <name>pyridoxal 5'-phosphate</name>
        <dbReference type="ChEBI" id="CHEBI:597326"/>
    </ligand>
</feature>
<feature type="binding site" evidence="1">
    <location>
        <position position="196"/>
    </location>
    <ligand>
        <name>pyridoxal 5'-phosphate</name>
        <dbReference type="ChEBI" id="CHEBI:597326"/>
    </ligand>
</feature>
<feature type="binding site" evidence="1">
    <location>
        <begin position="238"/>
        <end position="239"/>
    </location>
    <ligand>
        <name>pyridoxal 5'-phosphate</name>
        <dbReference type="ChEBI" id="CHEBI:597326"/>
    </ligand>
</feature>
<feature type="modified residue" description="N6-(pyridoxal phosphate)lysine" evidence="1">
    <location>
        <position position="197"/>
    </location>
</feature>
<evidence type="ECO:0000255" key="1">
    <source>
        <dbReference type="HAMAP-Rule" id="MF_00160"/>
    </source>
</evidence>
<dbReference type="EC" id="2.6.1.52" evidence="1"/>
<dbReference type="EMBL" id="CP000817">
    <property type="protein sequence ID" value="ACA41154.1"/>
    <property type="molecule type" value="Genomic_DNA"/>
</dbReference>
<dbReference type="RefSeq" id="WP_012295210.1">
    <property type="nucleotide sequence ID" value="NC_010382.1"/>
</dbReference>
<dbReference type="SMR" id="B1HSU6"/>
<dbReference type="EnsemblBacteria" id="ACA41154">
    <property type="protein sequence ID" value="ACA41154"/>
    <property type="gene ID" value="Bsph_3670"/>
</dbReference>
<dbReference type="KEGG" id="lsp:Bsph_3670"/>
<dbReference type="HOGENOM" id="CLU_034866_0_2_9"/>
<dbReference type="UniPathway" id="UPA00135">
    <property type="reaction ID" value="UER00197"/>
</dbReference>
<dbReference type="Proteomes" id="UP000002164">
    <property type="component" value="Chromosome"/>
</dbReference>
<dbReference type="GO" id="GO:0005737">
    <property type="term" value="C:cytoplasm"/>
    <property type="evidence" value="ECO:0007669"/>
    <property type="project" value="UniProtKB-SubCell"/>
</dbReference>
<dbReference type="GO" id="GO:0004648">
    <property type="term" value="F:O-phospho-L-serine:2-oxoglutarate aminotransferase activity"/>
    <property type="evidence" value="ECO:0007669"/>
    <property type="project" value="UniProtKB-UniRule"/>
</dbReference>
<dbReference type="GO" id="GO:0030170">
    <property type="term" value="F:pyridoxal phosphate binding"/>
    <property type="evidence" value="ECO:0007669"/>
    <property type="project" value="UniProtKB-UniRule"/>
</dbReference>
<dbReference type="GO" id="GO:0006564">
    <property type="term" value="P:L-serine biosynthetic process"/>
    <property type="evidence" value="ECO:0007669"/>
    <property type="project" value="UniProtKB-UniRule"/>
</dbReference>
<dbReference type="CDD" id="cd00611">
    <property type="entry name" value="PSAT_like"/>
    <property type="match status" value="1"/>
</dbReference>
<dbReference type="FunFam" id="3.40.640.10:FF:000010">
    <property type="entry name" value="Phosphoserine aminotransferase"/>
    <property type="match status" value="1"/>
</dbReference>
<dbReference type="FunFam" id="3.90.1150.10:FF:000006">
    <property type="entry name" value="Phosphoserine aminotransferase"/>
    <property type="match status" value="1"/>
</dbReference>
<dbReference type="Gene3D" id="3.90.1150.10">
    <property type="entry name" value="Aspartate Aminotransferase, domain 1"/>
    <property type="match status" value="1"/>
</dbReference>
<dbReference type="Gene3D" id="3.40.640.10">
    <property type="entry name" value="Type I PLP-dependent aspartate aminotransferase-like (Major domain)"/>
    <property type="match status" value="1"/>
</dbReference>
<dbReference type="HAMAP" id="MF_00160">
    <property type="entry name" value="SerC_aminotrans_5"/>
    <property type="match status" value="1"/>
</dbReference>
<dbReference type="InterPro" id="IPR000192">
    <property type="entry name" value="Aminotrans_V_dom"/>
</dbReference>
<dbReference type="InterPro" id="IPR020578">
    <property type="entry name" value="Aminotrans_V_PyrdxlP_BS"/>
</dbReference>
<dbReference type="InterPro" id="IPR022278">
    <property type="entry name" value="Pser_aminoTfrase"/>
</dbReference>
<dbReference type="InterPro" id="IPR015424">
    <property type="entry name" value="PyrdxlP-dep_Trfase"/>
</dbReference>
<dbReference type="InterPro" id="IPR015421">
    <property type="entry name" value="PyrdxlP-dep_Trfase_major"/>
</dbReference>
<dbReference type="InterPro" id="IPR015422">
    <property type="entry name" value="PyrdxlP-dep_Trfase_small"/>
</dbReference>
<dbReference type="NCBIfam" id="NF003764">
    <property type="entry name" value="PRK05355.1"/>
    <property type="match status" value="1"/>
</dbReference>
<dbReference type="NCBIfam" id="TIGR01364">
    <property type="entry name" value="serC_1"/>
    <property type="match status" value="1"/>
</dbReference>
<dbReference type="PANTHER" id="PTHR43247">
    <property type="entry name" value="PHOSPHOSERINE AMINOTRANSFERASE"/>
    <property type="match status" value="1"/>
</dbReference>
<dbReference type="PANTHER" id="PTHR43247:SF1">
    <property type="entry name" value="PHOSPHOSERINE AMINOTRANSFERASE"/>
    <property type="match status" value="1"/>
</dbReference>
<dbReference type="Pfam" id="PF00266">
    <property type="entry name" value="Aminotran_5"/>
    <property type="match status" value="1"/>
</dbReference>
<dbReference type="PIRSF" id="PIRSF000525">
    <property type="entry name" value="SerC"/>
    <property type="match status" value="1"/>
</dbReference>
<dbReference type="SUPFAM" id="SSF53383">
    <property type="entry name" value="PLP-dependent transferases"/>
    <property type="match status" value="1"/>
</dbReference>
<dbReference type="PROSITE" id="PS00595">
    <property type="entry name" value="AA_TRANSFER_CLASS_5"/>
    <property type="match status" value="1"/>
</dbReference>
<gene>
    <name evidence="1" type="primary">serC</name>
    <name type="ordered locus">Bsph_3670</name>
</gene>
<reference key="1">
    <citation type="journal article" date="2008" name="J. Bacteriol.">
        <title>Complete genome sequence of the mosquitocidal bacterium Bacillus sphaericus C3-41 and comparison with those of closely related Bacillus species.</title>
        <authorList>
            <person name="Hu X."/>
            <person name="Fan W."/>
            <person name="Han B."/>
            <person name="Liu H."/>
            <person name="Zheng D."/>
            <person name="Li Q."/>
            <person name="Dong W."/>
            <person name="Yan J."/>
            <person name="Gao M."/>
            <person name="Berry C."/>
            <person name="Yuan Z."/>
        </authorList>
    </citation>
    <scope>NUCLEOTIDE SEQUENCE [LARGE SCALE GENOMIC DNA]</scope>
    <source>
        <strain>C3-41</strain>
    </source>
</reference>
<accession>B1HSU6</accession>
<organism>
    <name type="scientific">Lysinibacillus sphaericus (strain C3-41)</name>
    <dbReference type="NCBI Taxonomy" id="444177"/>
    <lineage>
        <taxon>Bacteria</taxon>
        <taxon>Bacillati</taxon>
        <taxon>Bacillota</taxon>
        <taxon>Bacilli</taxon>
        <taxon>Bacillales</taxon>
        <taxon>Bacillaceae</taxon>
        <taxon>Lysinibacillus</taxon>
    </lineage>
</organism>